<dbReference type="EMBL" id="L09228">
    <property type="protein sequence ID" value="AAA67495.1"/>
    <property type="molecule type" value="Genomic_DNA"/>
</dbReference>
<dbReference type="EMBL" id="AL009126">
    <property type="protein sequence ID" value="CAB14246.1"/>
    <property type="molecule type" value="Genomic_DNA"/>
</dbReference>
<dbReference type="PIR" id="S45557">
    <property type="entry name" value="S45557"/>
</dbReference>
<dbReference type="RefSeq" id="NP_390195.1">
    <property type="nucleotide sequence ID" value="NC_000964.3"/>
</dbReference>
<dbReference type="RefSeq" id="WP_003230515.1">
    <property type="nucleotide sequence ID" value="NZ_OZ025638.1"/>
</dbReference>
<dbReference type="FunCoup" id="P35161">
    <property type="interactions" value="229"/>
</dbReference>
<dbReference type="IntAct" id="P35161">
    <property type="interactions" value="2"/>
</dbReference>
<dbReference type="STRING" id="224308.BSU23140"/>
<dbReference type="PaxDb" id="224308-BSU23140"/>
<dbReference type="EnsemblBacteria" id="CAB14246">
    <property type="protein sequence ID" value="CAB14246"/>
    <property type="gene ID" value="BSU_23140"/>
</dbReference>
<dbReference type="GeneID" id="938961"/>
<dbReference type="KEGG" id="bsu:BSU23140"/>
<dbReference type="PATRIC" id="fig|224308.179.peg.2521"/>
<dbReference type="eggNOG" id="COG1333">
    <property type="taxonomic scope" value="Bacteria"/>
</dbReference>
<dbReference type="InParanoid" id="P35161"/>
<dbReference type="OrthoDB" id="9770923at2"/>
<dbReference type="BioCyc" id="BSUB:BSU23140-MONOMER"/>
<dbReference type="BioCyc" id="MetaCyc:BSU23140-MONOMER"/>
<dbReference type="Proteomes" id="UP000001570">
    <property type="component" value="Chromosome"/>
</dbReference>
<dbReference type="GO" id="GO:0005886">
    <property type="term" value="C:plasma membrane"/>
    <property type="evidence" value="ECO:0007669"/>
    <property type="project" value="UniProtKB-SubCell"/>
</dbReference>
<dbReference type="GO" id="GO:0017004">
    <property type="term" value="P:cytochrome complex assembly"/>
    <property type="evidence" value="ECO:0007669"/>
    <property type="project" value="UniProtKB-KW"/>
</dbReference>
<dbReference type="InterPro" id="IPR023494">
    <property type="entry name" value="Cyt_c_bgen_Ccs1/CcsB/ResB"/>
</dbReference>
<dbReference type="InterPro" id="IPR007816">
    <property type="entry name" value="ResB-like_domain"/>
</dbReference>
<dbReference type="PANTHER" id="PTHR31566">
    <property type="entry name" value="CYTOCHROME C BIOGENESIS PROTEIN CCS1, CHLOROPLASTIC"/>
    <property type="match status" value="1"/>
</dbReference>
<dbReference type="PANTHER" id="PTHR31566:SF0">
    <property type="entry name" value="CYTOCHROME C BIOGENESIS PROTEIN CCS1, CHLOROPLASTIC"/>
    <property type="match status" value="1"/>
</dbReference>
<dbReference type="Pfam" id="PF05140">
    <property type="entry name" value="ResB"/>
    <property type="match status" value="2"/>
</dbReference>
<organism>
    <name type="scientific">Bacillus subtilis (strain 168)</name>
    <dbReference type="NCBI Taxonomy" id="224308"/>
    <lineage>
        <taxon>Bacteria</taxon>
        <taxon>Bacillati</taxon>
        <taxon>Bacillota</taxon>
        <taxon>Bacilli</taxon>
        <taxon>Bacillales</taxon>
        <taxon>Bacillaceae</taxon>
        <taxon>Bacillus</taxon>
    </lineage>
</organism>
<sequence length="542" mass="61761">MKQVKCECGHINPVGTVLCESCGRALQETQPPLADMRYDGSARRSQTYNKTIIDKIWNFFSSVKVGIWLIVITLAASAFGTIFPQEAYLPPGAQADTYYKEQYGTFGQLYYLLGFHHLYGSWWYLLLIASIGISLVICSLDRVIPLYRALKNQGVRRSPAFLRRQRLFSETVTVLNGESKEKIVTLLKKKHYRIREKEGSILAEKGRFSRWGPYVNHIGLIIFLIGAMLRFVPGMYVDETLWVREGETAAIPGTDGKYYLKNNQFSVETYNSKTEKKVFADAIDRVGDGRVAKNFQTDAVLYKREGKIVYGEKPKLEKVTEEDIRVNQPLRFDSFSVYQVDYKENQLDQMVFQLIDKKTKKSFGSLKINLLDPDSVYDLGNGYKVEIASYLPDFYFNQDGEPSTKTKIPNNPAFVFNIITPDKPKGEKSFVAIQETIEGSGNNKYKLKFDHVETKNITGLTVRKDLTLWVLAVGGAIFMIGVIQGMYWQHRRIWLHSQDGAVMVAGHTNKNWFGLKKDLAFILADSGLTEPVDQKELIKTQK</sequence>
<reference key="1">
    <citation type="journal article" date="1993" name="Mol. Microbiol.">
        <title>The organization of the Bacillus subtilis 168 chromosome region between the spoVA and serA genetic loci, based on sequence data.</title>
        <authorList>
            <person name="Sorokin A.V."/>
            <person name="Zumstein E."/>
            <person name="Azevedo V."/>
            <person name="Ehrlich S.D."/>
            <person name="Serror P."/>
        </authorList>
    </citation>
    <scope>NUCLEOTIDE SEQUENCE [GENOMIC DNA]</scope>
    <source>
        <strain>168 / Marburg / ATCC 6051 / DSM 10 / JCM 1465 / NBRC 13719 / NCIMB 3610 / NRRL NRS-744 / VKM B-501</strain>
    </source>
</reference>
<reference key="2">
    <citation type="journal article" date="1997" name="Nature">
        <title>The complete genome sequence of the Gram-positive bacterium Bacillus subtilis.</title>
        <authorList>
            <person name="Kunst F."/>
            <person name="Ogasawara N."/>
            <person name="Moszer I."/>
            <person name="Albertini A.M."/>
            <person name="Alloni G."/>
            <person name="Azevedo V."/>
            <person name="Bertero M.G."/>
            <person name="Bessieres P."/>
            <person name="Bolotin A."/>
            <person name="Borchert S."/>
            <person name="Borriss R."/>
            <person name="Boursier L."/>
            <person name="Brans A."/>
            <person name="Braun M."/>
            <person name="Brignell S.C."/>
            <person name="Bron S."/>
            <person name="Brouillet S."/>
            <person name="Bruschi C.V."/>
            <person name="Caldwell B."/>
            <person name="Capuano V."/>
            <person name="Carter N.M."/>
            <person name="Choi S.-K."/>
            <person name="Codani J.-J."/>
            <person name="Connerton I.F."/>
            <person name="Cummings N.J."/>
            <person name="Daniel R.A."/>
            <person name="Denizot F."/>
            <person name="Devine K.M."/>
            <person name="Duesterhoeft A."/>
            <person name="Ehrlich S.D."/>
            <person name="Emmerson P.T."/>
            <person name="Entian K.-D."/>
            <person name="Errington J."/>
            <person name="Fabret C."/>
            <person name="Ferrari E."/>
            <person name="Foulger D."/>
            <person name="Fritz C."/>
            <person name="Fujita M."/>
            <person name="Fujita Y."/>
            <person name="Fuma S."/>
            <person name="Galizzi A."/>
            <person name="Galleron N."/>
            <person name="Ghim S.-Y."/>
            <person name="Glaser P."/>
            <person name="Goffeau A."/>
            <person name="Golightly E.J."/>
            <person name="Grandi G."/>
            <person name="Guiseppi G."/>
            <person name="Guy B.J."/>
            <person name="Haga K."/>
            <person name="Haiech J."/>
            <person name="Harwood C.R."/>
            <person name="Henaut A."/>
            <person name="Hilbert H."/>
            <person name="Holsappel S."/>
            <person name="Hosono S."/>
            <person name="Hullo M.-F."/>
            <person name="Itaya M."/>
            <person name="Jones L.-M."/>
            <person name="Joris B."/>
            <person name="Karamata D."/>
            <person name="Kasahara Y."/>
            <person name="Klaerr-Blanchard M."/>
            <person name="Klein C."/>
            <person name="Kobayashi Y."/>
            <person name="Koetter P."/>
            <person name="Koningstein G."/>
            <person name="Krogh S."/>
            <person name="Kumano M."/>
            <person name="Kurita K."/>
            <person name="Lapidus A."/>
            <person name="Lardinois S."/>
            <person name="Lauber J."/>
            <person name="Lazarevic V."/>
            <person name="Lee S.-M."/>
            <person name="Levine A."/>
            <person name="Liu H."/>
            <person name="Masuda S."/>
            <person name="Mauel C."/>
            <person name="Medigue C."/>
            <person name="Medina N."/>
            <person name="Mellado R.P."/>
            <person name="Mizuno M."/>
            <person name="Moestl D."/>
            <person name="Nakai S."/>
            <person name="Noback M."/>
            <person name="Noone D."/>
            <person name="O'Reilly M."/>
            <person name="Ogawa K."/>
            <person name="Ogiwara A."/>
            <person name="Oudega B."/>
            <person name="Park S.-H."/>
            <person name="Parro V."/>
            <person name="Pohl T.M."/>
            <person name="Portetelle D."/>
            <person name="Porwollik S."/>
            <person name="Prescott A.M."/>
            <person name="Presecan E."/>
            <person name="Pujic P."/>
            <person name="Purnelle B."/>
            <person name="Rapoport G."/>
            <person name="Rey M."/>
            <person name="Reynolds S."/>
            <person name="Rieger M."/>
            <person name="Rivolta C."/>
            <person name="Rocha E."/>
            <person name="Roche B."/>
            <person name="Rose M."/>
            <person name="Sadaie Y."/>
            <person name="Sato T."/>
            <person name="Scanlan E."/>
            <person name="Schleich S."/>
            <person name="Schroeter R."/>
            <person name="Scoffone F."/>
            <person name="Sekiguchi J."/>
            <person name="Sekowska A."/>
            <person name="Seror S.J."/>
            <person name="Serror P."/>
            <person name="Shin B.-S."/>
            <person name="Soldo B."/>
            <person name="Sorokin A."/>
            <person name="Tacconi E."/>
            <person name="Takagi T."/>
            <person name="Takahashi H."/>
            <person name="Takemaru K."/>
            <person name="Takeuchi M."/>
            <person name="Tamakoshi A."/>
            <person name="Tanaka T."/>
            <person name="Terpstra P."/>
            <person name="Tognoni A."/>
            <person name="Tosato V."/>
            <person name="Uchiyama S."/>
            <person name="Vandenbol M."/>
            <person name="Vannier F."/>
            <person name="Vassarotti A."/>
            <person name="Viari A."/>
            <person name="Wambutt R."/>
            <person name="Wedler E."/>
            <person name="Wedler H."/>
            <person name="Weitzenegger T."/>
            <person name="Winters P."/>
            <person name="Wipat A."/>
            <person name="Yamamoto H."/>
            <person name="Yamane K."/>
            <person name="Yasumoto K."/>
            <person name="Yata K."/>
            <person name="Yoshida K."/>
            <person name="Yoshikawa H.-F."/>
            <person name="Zumstein E."/>
            <person name="Yoshikawa H."/>
            <person name="Danchin A."/>
        </authorList>
    </citation>
    <scope>NUCLEOTIDE SEQUENCE [LARGE SCALE GENOMIC DNA]</scope>
    <source>
        <strain>168</strain>
    </source>
</reference>
<reference key="3">
    <citation type="journal article" date="1996" name="J. Bacteriol.">
        <title>Regulators of aerobic and anaerobic respiration in Bacillus subtilis.</title>
        <authorList>
            <person name="Sun G."/>
            <person name="Sharkova E."/>
            <person name="Chesnut R."/>
            <person name="Birkey S."/>
            <person name="Duggan M.F."/>
            <person name="Sorokin A.V."/>
            <person name="Pujic P."/>
            <person name="Ehrlich S.D."/>
            <person name="Hulett F.M."/>
        </authorList>
    </citation>
    <scope>GENE NAME</scope>
</reference>
<reference key="4">
    <citation type="journal article" date="2000" name="Mol. Microbiol.">
        <title>Genes required for cytochrome c synthesis in Bacillus subtilis.</title>
        <authorList>
            <person name="Le Brun N.E."/>
            <person name="Bengtsson J."/>
            <person name="Hederstedt L."/>
        </authorList>
    </citation>
    <scope>FUNCTION</scope>
    <scope>DISRUPTION PHENOTYPE</scope>
    <source>
        <strain>168 / BGSC1A1</strain>
    </source>
</reference>
<name>RESB_BACSU</name>
<feature type="chain" id="PRO_0000097253" description="Cytochrome c biogenesis protein ResB">
    <location>
        <begin position="1"/>
        <end position="542"/>
    </location>
</feature>
<feature type="transmembrane region" description="Helical" evidence="1">
    <location>
        <begin position="63"/>
        <end position="83"/>
    </location>
</feature>
<feature type="transmembrane region" description="Helical" evidence="1">
    <location>
        <begin position="118"/>
        <end position="138"/>
    </location>
</feature>
<feature type="transmembrane region" description="Helical" evidence="1">
    <location>
        <begin position="217"/>
        <end position="237"/>
    </location>
</feature>
<feature type="transmembrane region" description="Helical" evidence="1">
    <location>
        <begin position="468"/>
        <end position="488"/>
    </location>
</feature>
<keyword id="KW-1003">Cell membrane</keyword>
<keyword id="KW-0201">Cytochrome c-type biogenesis</keyword>
<keyword id="KW-0472">Membrane</keyword>
<keyword id="KW-1185">Reference proteome</keyword>
<keyword id="KW-0812">Transmembrane</keyword>
<keyword id="KW-1133">Transmembrane helix</keyword>
<comment type="function">
    <text evidence="2">Required for the biogenesis of c-type cytochromes.</text>
</comment>
<comment type="subcellular location">
    <subcellularLocation>
        <location evidence="3">Cell membrane</location>
        <topology evidence="3">Multi-pass membrane protein</topology>
    </subcellularLocation>
</comment>
<comment type="disruption phenotype">
    <text evidence="2">Cells lacking this gene exhibit a lack of cytochromes c but normal contents of cytochrome a and b. Can sporulate.</text>
</comment>
<proteinExistence type="predicted"/>
<protein>
    <recommendedName>
        <fullName>Cytochrome c biogenesis protein ResB</fullName>
    </recommendedName>
</protein>
<gene>
    <name type="primary">resB</name>
    <name type="synonym">ypxB</name>
    <name type="ordered locus">BSU23140</name>
</gene>
<evidence type="ECO:0000255" key="1"/>
<evidence type="ECO:0000269" key="2">
    <source>
    </source>
</evidence>
<evidence type="ECO:0000305" key="3"/>
<accession>P35161</accession>